<evidence type="ECO:0000255" key="1">
    <source>
        <dbReference type="HAMAP-Rule" id="MF_00500"/>
    </source>
</evidence>
<evidence type="ECO:0000256" key="2">
    <source>
        <dbReference type="SAM" id="MobiDB-lite"/>
    </source>
</evidence>
<evidence type="ECO:0000305" key="3"/>
<reference key="1">
    <citation type="submission" date="2006-08" db="EMBL/GenBank/DDBJ databases">
        <title>Complete sequence of chromosome 1 of Burkholderia cepacia AMMD.</title>
        <authorList>
            <person name="Copeland A."/>
            <person name="Lucas S."/>
            <person name="Lapidus A."/>
            <person name="Barry K."/>
            <person name="Detter J.C."/>
            <person name="Glavina del Rio T."/>
            <person name="Hammon N."/>
            <person name="Israni S."/>
            <person name="Pitluck S."/>
            <person name="Bruce D."/>
            <person name="Chain P."/>
            <person name="Malfatti S."/>
            <person name="Shin M."/>
            <person name="Vergez L."/>
            <person name="Schmutz J."/>
            <person name="Larimer F."/>
            <person name="Land M."/>
            <person name="Hauser L."/>
            <person name="Kyrpides N."/>
            <person name="Kim E."/>
            <person name="Parke J."/>
            <person name="Coenye T."/>
            <person name="Konstantinidis K."/>
            <person name="Ramette A."/>
            <person name="Tiedje J."/>
            <person name="Richardson P."/>
        </authorList>
    </citation>
    <scope>NUCLEOTIDE SEQUENCE [LARGE SCALE GENOMIC DNA]</scope>
    <source>
        <strain>ATCC BAA-244 / DSM 16087 / CCUG 44356 / LMG 19182 / AMMD</strain>
    </source>
</reference>
<gene>
    <name evidence="1" type="primary">rpsT</name>
    <name type="ordered locus">Bamb_2600</name>
</gene>
<feature type="chain" id="PRO_1000014556" description="Small ribosomal subunit protein bS20">
    <location>
        <begin position="1"/>
        <end position="90"/>
    </location>
</feature>
<feature type="region of interest" description="Disordered" evidence="2">
    <location>
        <begin position="1"/>
        <end position="25"/>
    </location>
</feature>
<name>RS20_BURCM</name>
<proteinExistence type="inferred from homology"/>
<sequence>MANSAQARKRARQAAKANSHNSALRSKFRTAIKSVRKAVEAGDQAKAAELFKAAVKTIDTIADKKIVHKNKAARSKSRLAAAVKGLQAAA</sequence>
<accession>Q0BCG7</accession>
<keyword id="KW-0687">Ribonucleoprotein</keyword>
<keyword id="KW-0689">Ribosomal protein</keyword>
<keyword id="KW-0694">RNA-binding</keyword>
<keyword id="KW-0699">rRNA-binding</keyword>
<dbReference type="EMBL" id="CP000440">
    <property type="protein sequence ID" value="ABI88156.1"/>
    <property type="molecule type" value="Genomic_DNA"/>
</dbReference>
<dbReference type="RefSeq" id="WP_006482211.1">
    <property type="nucleotide sequence ID" value="NZ_CP009798.1"/>
</dbReference>
<dbReference type="SMR" id="Q0BCG7"/>
<dbReference type="GeneID" id="98106158"/>
<dbReference type="KEGG" id="bam:Bamb_2600"/>
<dbReference type="PATRIC" id="fig|339670.21.peg.2302"/>
<dbReference type="eggNOG" id="COG0268">
    <property type="taxonomic scope" value="Bacteria"/>
</dbReference>
<dbReference type="Proteomes" id="UP000000662">
    <property type="component" value="Chromosome 1"/>
</dbReference>
<dbReference type="GO" id="GO:0005829">
    <property type="term" value="C:cytosol"/>
    <property type="evidence" value="ECO:0007669"/>
    <property type="project" value="TreeGrafter"/>
</dbReference>
<dbReference type="GO" id="GO:0015935">
    <property type="term" value="C:small ribosomal subunit"/>
    <property type="evidence" value="ECO:0007669"/>
    <property type="project" value="TreeGrafter"/>
</dbReference>
<dbReference type="GO" id="GO:0070181">
    <property type="term" value="F:small ribosomal subunit rRNA binding"/>
    <property type="evidence" value="ECO:0007669"/>
    <property type="project" value="TreeGrafter"/>
</dbReference>
<dbReference type="GO" id="GO:0003735">
    <property type="term" value="F:structural constituent of ribosome"/>
    <property type="evidence" value="ECO:0007669"/>
    <property type="project" value="InterPro"/>
</dbReference>
<dbReference type="GO" id="GO:0006412">
    <property type="term" value="P:translation"/>
    <property type="evidence" value="ECO:0007669"/>
    <property type="project" value="UniProtKB-UniRule"/>
</dbReference>
<dbReference type="FunFam" id="1.20.58.110:FF:000001">
    <property type="entry name" value="30S ribosomal protein S20"/>
    <property type="match status" value="1"/>
</dbReference>
<dbReference type="Gene3D" id="1.20.58.110">
    <property type="entry name" value="Ribosomal protein S20"/>
    <property type="match status" value="1"/>
</dbReference>
<dbReference type="HAMAP" id="MF_00500">
    <property type="entry name" value="Ribosomal_bS20"/>
    <property type="match status" value="1"/>
</dbReference>
<dbReference type="InterPro" id="IPR002583">
    <property type="entry name" value="Ribosomal_bS20"/>
</dbReference>
<dbReference type="InterPro" id="IPR036510">
    <property type="entry name" value="Ribosomal_bS20_sf"/>
</dbReference>
<dbReference type="NCBIfam" id="TIGR00029">
    <property type="entry name" value="S20"/>
    <property type="match status" value="1"/>
</dbReference>
<dbReference type="PANTHER" id="PTHR33398">
    <property type="entry name" value="30S RIBOSOMAL PROTEIN S20"/>
    <property type="match status" value="1"/>
</dbReference>
<dbReference type="PANTHER" id="PTHR33398:SF1">
    <property type="entry name" value="SMALL RIBOSOMAL SUBUNIT PROTEIN BS20C"/>
    <property type="match status" value="1"/>
</dbReference>
<dbReference type="Pfam" id="PF01649">
    <property type="entry name" value="Ribosomal_S20p"/>
    <property type="match status" value="1"/>
</dbReference>
<dbReference type="SUPFAM" id="SSF46992">
    <property type="entry name" value="Ribosomal protein S20"/>
    <property type="match status" value="1"/>
</dbReference>
<comment type="function">
    <text evidence="1">Binds directly to 16S ribosomal RNA.</text>
</comment>
<comment type="similarity">
    <text evidence="1">Belongs to the bacterial ribosomal protein bS20 family.</text>
</comment>
<protein>
    <recommendedName>
        <fullName evidence="1">Small ribosomal subunit protein bS20</fullName>
    </recommendedName>
    <alternativeName>
        <fullName evidence="3">30S ribosomal protein S20</fullName>
    </alternativeName>
</protein>
<organism>
    <name type="scientific">Burkholderia ambifaria (strain ATCC BAA-244 / DSM 16087 / CCUG 44356 / LMG 19182 / AMMD)</name>
    <name type="common">Burkholderia cepacia (strain AMMD)</name>
    <dbReference type="NCBI Taxonomy" id="339670"/>
    <lineage>
        <taxon>Bacteria</taxon>
        <taxon>Pseudomonadati</taxon>
        <taxon>Pseudomonadota</taxon>
        <taxon>Betaproteobacteria</taxon>
        <taxon>Burkholderiales</taxon>
        <taxon>Burkholderiaceae</taxon>
        <taxon>Burkholderia</taxon>
        <taxon>Burkholderia cepacia complex</taxon>
    </lineage>
</organism>